<proteinExistence type="inferred from homology"/>
<name>RL4_STRPD</name>
<reference key="1">
    <citation type="journal article" date="2006" name="Proc. Natl. Acad. Sci. U.S.A.">
        <title>Molecular genetic anatomy of inter- and intraserotype variation in the human bacterial pathogen group A Streptococcus.</title>
        <authorList>
            <person name="Beres S.B."/>
            <person name="Richter E.W."/>
            <person name="Nagiec M.J."/>
            <person name="Sumby P."/>
            <person name="Porcella S.F."/>
            <person name="DeLeo F.R."/>
            <person name="Musser J.M."/>
        </authorList>
    </citation>
    <scope>NUCLEOTIDE SEQUENCE [LARGE SCALE GENOMIC DNA]</scope>
    <source>
        <strain>MGAS10270</strain>
    </source>
</reference>
<comment type="function">
    <text evidence="1">One of the primary rRNA binding proteins, this protein initially binds near the 5'-end of the 23S rRNA. It is important during the early stages of 50S assembly. It makes multiple contacts with different domains of the 23S rRNA in the assembled 50S subunit and ribosome.</text>
</comment>
<comment type="function">
    <text evidence="1">Forms part of the polypeptide exit tunnel.</text>
</comment>
<comment type="subunit">
    <text evidence="1">Part of the 50S ribosomal subunit.</text>
</comment>
<comment type="similarity">
    <text evidence="1">Belongs to the universal ribosomal protein uL4 family.</text>
</comment>
<evidence type="ECO:0000255" key="1">
    <source>
        <dbReference type="HAMAP-Rule" id="MF_01328"/>
    </source>
</evidence>
<evidence type="ECO:0000256" key="2">
    <source>
        <dbReference type="SAM" id="MobiDB-lite"/>
    </source>
</evidence>
<evidence type="ECO:0000305" key="3"/>
<gene>
    <name evidence="1" type="primary">rplD</name>
    <name type="ordered locus">MGAS10270_Spy0047</name>
</gene>
<protein>
    <recommendedName>
        <fullName evidence="1">Large ribosomal subunit protein uL4</fullName>
    </recommendedName>
    <alternativeName>
        <fullName evidence="3">50S ribosomal protein L4</fullName>
    </alternativeName>
</protein>
<organism>
    <name type="scientific">Streptococcus pyogenes serotype M2 (strain MGAS10270)</name>
    <dbReference type="NCBI Taxonomy" id="370552"/>
    <lineage>
        <taxon>Bacteria</taxon>
        <taxon>Bacillati</taxon>
        <taxon>Bacillota</taxon>
        <taxon>Bacilli</taxon>
        <taxon>Lactobacillales</taxon>
        <taxon>Streptococcaceae</taxon>
        <taxon>Streptococcus</taxon>
    </lineage>
</organism>
<keyword id="KW-0687">Ribonucleoprotein</keyword>
<keyword id="KW-0689">Ribosomal protein</keyword>
<keyword id="KW-0694">RNA-binding</keyword>
<keyword id="KW-0699">rRNA-binding</keyword>
<dbReference type="EMBL" id="CP000260">
    <property type="protein sequence ID" value="ABF33112.1"/>
    <property type="molecule type" value="Genomic_DNA"/>
</dbReference>
<dbReference type="RefSeq" id="WP_002986657.1">
    <property type="nucleotide sequence ID" value="NZ_CVUH01000001.1"/>
</dbReference>
<dbReference type="SMR" id="Q1JJ61"/>
<dbReference type="GeneID" id="83689572"/>
<dbReference type="KEGG" id="sph:MGAS10270_Spy0047"/>
<dbReference type="HOGENOM" id="CLU_041575_5_2_9"/>
<dbReference type="Proteomes" id="UP000002436">
    <property type="component" value="Chromosome"/>
</dbReference>
<dbReference type="GO" id="GO:1990904">
    <property type="term" value="C:ribonucleoprotein complex"/>
    <property type="evidence" value="ECO:0007669"/>
    <property type="project" value="UniProtKB-KW"/>
</dbReference>
<dbReference type="GO" id="GO:0005840">
    <property type="term" value="C:ribosome"/>
    <property type="evidence" value="ECO:0007669"/>
    <property type="project" value="UniProtKB-KW"/>
</dbReference>
<dbReference type="GO" id="GO:0019843">
    <property type="term" value="F:rRNA binding"/>
    <property type="evidence" value="ECO:0007669"/>
    <property type="project" value="UniProtKB-UniRule"/>
</dbReference>
<dbReference type="GO" id="GO:0003735">
    <property type="term" value="F:structural constituent of ribosome"/>
    <property type="evidence" value="ECO:0007669"/>
    <property type="project" value="InterPro"/>
</dbReference>
<dbReference type="GO" id="GO:0006412">
    <property type="term" value="P:translation"/>
    <property type="evidence" value="ECO:0007669"/>
    <property type="project" value="UniProtKB-UniRule"/>
</dbReference>
<dbReference type="FunFam" id="3.40.1370.10:FF:000003">
    <property type="entry name" value="50S ribosomal protein L4"/>
    <property type="match status" value="1"/>
</dbReference>
<dbReference type="Gene3D" id="3.40.1370.10">
    <property type="match status" value="1"/>
</dbReference>
<dbReference type="HAMAP" id="MF_01328_B">
    <property type="entry name" value="Ribosomal_uL4_B"/>
    <property type="match status" value="1"/>
</dbReference>
<dbReference type="InterPro" id="IPR002136">
    <property type="entry name" value="Ribosomal_uL4"/>
</dbReference>
<dbReference type="InterPro" id="IPR013005">
    <property type="entry name" value="Ribosomal_uL4-like"/>
</dbReference>
<dbReference type="InterPro" id="IPR023574">
    <property type="entry name" value="Ribosomal_uL4_dom_sf"/>
</dbReference>
<dbReference type="NCBIfam" id="TIGR03953">
    <property type="entry name" value="rplD_bact"/>
    <property type="match status" value="1"/>
</dbReference>
<dbReference type="PANTHER" id="PTHR10746">
    <property type="entry name" value="50S RIBOSOMAL PROTEIN L4"/>
    <property type="match status" value="1"/>
</dbReference>
<dbReference type="PANTHER" id="PTHR10746:SF6">
    <property type="entry name" value="LARGE RIBOSOMAL SUBUNIT PROTEIN UL4M"/>
    <property type="match status" value="1"/>
</dbReference>
<dbReference type="Pfam" id="PF00573">
    <property type="entry name" value="Ribosomal_L4"/>
    <property type="match status" value="1"/>
</dbReference>
<dbReference type="SUPFAM" id="SSF52166">
    <property type="entry name" value="Ribosomal protein L4"/>
    <property type="match status" value="1"/>
</dbReference>
<feature type="chain" id="PRO_1000052511" description="Large ribosomal subunit protein uL4">
    <location>
        <begin position="1"/>
        <end position="207"/>
    </location>
</feature>
<feature type="region of interest" description="Disordered" evidence="2">
    <location>
        <begin position="49"/>
        <end position="78"/>
    </location>
</feature>
<sequence length="207" mass="22125">MANVKLFDQTGKEVSSVELNDAIFGIEPNESVVFDVVISQRASLRQGTHAVKNRSAVSGGGRKPWRQKGTGRARQGSIRSPQWRGGGVVFGPTPRSYGYKLPQKVRRLALKSVYSAKVAEDKFVAVEGLSFAAPKTAEFAKVLSALSIDTKVLVLVEEGNEFAALSARNLPNVTVATAATASVLDIVNADKLLVTKEAISTIEEVLA</sequence>
<accession>Q1JJ61</accession>